<reference key="1">
    <citation type="journal article" date="1991" name="J. Bacteriol.">
        <title>The Bacillus subtilis hemAXCDBL gene cluster, which encodes enzymes of the biosynthetic pathway from glutamate to uroporphyrinogen III.</title>
        <authorList>
            <person name="Hansson M."/>
            <person name="Rutberg L."/>
            <person name="Schroeder I."/>
            <person name="Hederstedt L."/>
        </authorList>
    </citation>
    <scope>NUCLEOTIDE SEQUENCE [GENOMIC DNA]</scope>
</reference>
<reference key="2">
    <citation type="journal article" date="1997" name="Nature">
        <title>The complete genome sequence of the Gram-positive bacterium Bacillus subtilis.</title>
        <authorList>
            <person name="Kunst F."/>
            <person name="Ogasawara N."/>
            <person name="Moszer I."/>
            <person name="Albertini A.M."/>
            <person name="Alloni G."/>
            <person name="Azevedo V."/>
            <person name="Bertero M.G."/>
            <person name="Bessieres P."/>
            <person name="Bolotin A."/>
            <person name="Borchert S."/>
            <person name="Borriss R."/>
            <person name="Boursier L."/>
            <person name="Brans A."/>
            <person name="Braun M."/>
            <person name="Brignell S.C."/>
            <person name="Bron S."/>
            <person name="Brouillet S."/>
            <person name="Bruschi C.V."/>
            <person name="Caldwell B."/>
            <person name="Capuano V."/>
            <person name="Carter N.M."/>
            <person name="Choi S.-K."/>
            <person name="Codani J.-J."/>
            <person name="Connerton I.F."/>
            <person name="Cummings N.J."/>
            <person name="Daniel R.A."/>
            <person name="Denizot F."/>
            <person name="Devine K.M."/>
            <person name="Duesterhoeft A."/>
            <person name="Ehrlich S.D."/>
            <person name="Emmerson P.T."/>
            <person name="Entian K.-D."/>
            <person name="Errington J."/>
            <person name="Fabret C."/>
            <person name="Ferrari E."/>
            <person name="Foulger D."/>
            <person name="Fritz C."/>
            <person name="Fujita M."/>
            <person name="Fujita Y."/>
            <person name="Fuma S."/>
            <person name="Galizzi A."/>
            <person name="Galleron N."/>
            <person name="Ghim S.-Y."/>
            <person name="Glaser P."/>
            <person name="Goffeau A."/>
            <person name="Golightly E.J."/>
            <person name="Grandi G."/>
            <person name="Guiseppi G."/>
            <person name="Guy B.J."/>
            <person name="Haga K."/>
            <person name="Haiech J."/>
            <person name="Harwood C.R."/>
            <person name="Henaut A."/>
            <person name="Hilbert H."/>
            <person name="Holsappel S."/>
            <person name="Hosono S."/>
            <person name="Hullo M.-F."/>
            <person name="Itaya M."/>
            <person name="Jones L.-M."/>
            <person name="Joris B."/>
            <person name="Karamata D."/>
            <person name="Kasahara Y."/>
            <person name="Klaerr-Blanchard M."/>
            <person name="Klein C."/>
            <person name="Kobayashi Y."/>
            <person name="Koetter P."/>
            <person name="Koningstein G."/>
            <person name="Krogh S."/>
            <person name="Kumano M."/>
            <person name="Kurita K."/>
            <person name="Lapidus A."/>
            <person name="Lardinois S."/>
            <person name="Lauber J."/>
            <person name="Lazarevic V."/>
            <person name="Lee S.-M."/>
            <person name="Levine A."/>
            <person name="Liu H."/>
            <person name="Masuda S."/>
            <person name="Mauel C."/>
            <person name="Medigue C."/>
            <person name="Medina N."/>
            <person name="Mellado R.P."/>
            <person name="Mizuno M."/>
            <person name="Moestl D."/>
            <person name="Nakai S."/>
            <person name="Noback M."/>
            <person name="Noone D."/>
            <person name="O'Reilly M."/>
            <person name="Ogawa K."/>
            <person name="Ogiwara A."/>
            <person name="Oudega B."/>
            <person name="Park S.-H."/>
            <person name="Parro V."/>
            <person name="Pohl T.M."/>
            <person name="Portetelle D."/>
            <person name="Porwollik S."/>
            <person name="Prescott A.M."/>
            <person name="Presecan E."/>
            <person name="Pujic P."/>
            <person name="Purnelle B."/>
            <person name="Rapoport G."/>
            <person name="Rey M."/>
            <person name="Reynolds S."/>
            <person name="Rieger M."/>
            <person name="Rivolta C."/>
            <person name="Rocha E."/>
            <person name="Roche B."/>
            <person name="Rose M."/>
            <person name="Sadaie Y."/>
            <person name="Sato T."/>
            <person name="Scanlan E."/>
            <person name="Schleich S."/>
            <person name="Schroeter R."/>
            <person name="Scoffone F."/>
            <person name="Sekiguchi J."/>
            <person name="Sekowska A."/>
            <person name="Seror S.J."/>
            <person name="Serror P."/>
            <person name="Shin B.-S."/>
            <person name="Soldo B."/>
            <person name="Sorokin A."/>
            <person name="Tacconi E."/>
            <person name="Takagi T."/>
            <person name="Takahashi H."/>
            <person name="Takemaru K."/>
            <person name="Takeuchi M."/>
            <person name="Tamakoshi A."/>
            <person name="Tanaka T."/>
            <person name="Terpstra P."/>
            <person name="Tognoni A."/>
            <person name="Tosato V."/>
            <person name="Uchiyama S."/>
            <person name="Vandenbol M."/>
            <person name="Vannier F."/>
            <person name="Vassarotti A."/>
            <person name="Viari A."/>
            <person name="Wambutt R."/>
            <person name="Wedler E."/>
            <person name="Wedler H."/>
            <person name="Weitzenegger T."/>
            <person name="Winters P."/>
            <person name="Wipat A."/>
            <person name="Yamamoto H."/>
            <person name="Yamane K."/>
            <person name="Yasumoto K."/>
            <person name="Yata K."/>
            <person name="Yoshida K."/>
            <person name="Yoshikawa H.-F."/>
            <person name="Zumstein E."/>
            <person name="Yoshikawa H."/>
            <person name="Danchin A."/>
        </authorList>
    </citation>
    <scope>NUCLEOTIDE SEQUENCE [LARGE SCALE GENOMIC DNA]</scope>
    <source>
        <strain>168</strain>
    </source>
</reference>
<reference key="3">
    <citation type="journal article" date="1990" name="J. Bacteriol.">
        <title>Cloning and characterization of the hemA region of the Bacillus subtilis chromosome.</title>
        <authorList>
            <person name="Petricek M."/>
            <person name="Rutberg L."/>
            <person name="Schroeder I."/>
            <person name="Hederstedt L."/>
        </authorList>
    </citation>
    <scope>NUCLEOTIDE SEQUENCE [GENOMIC DNA] OF 1-130</scope>
</reference>
<protein>
    <recommendedName>
        <fullName>Uroporphyrinogen-III synthase</fullName>
        <shortName>UROS</shortName>
        <ecNumber>4.2.1.75</ecNumber>
    </recommendedName>
    <alternativeName>
        <fullName>Hydroxymethylbilane hydrolyase [cyclizing]</fullName>
    </alternativeName>
    <alternativeName>
        <fullName>Uroporphyrinogen-III cosynthase</fullName>
    </alternativeName>
</protein>
<comment type="function">
    <text evidence="1">Catalyzes cyclization of the linear tetrapyrrole, hydroxymethylbilane, to the macrocyclic uroporphyrinogen III.</text>
</comment>
<comment type="catalytic activity">
    <reaction>
        <text>hydroxymethylbilane = uroporphyrinogen III + H2O</text>
        <dbReference type="Rhea" id="RHEA:18965"/>
        <dbReference type="ChEBI" id="CHEBI:15377"/>
        <dbReference type="ChEBI" id="CHEBI:57308"/>
        <dbReference type="ChEBI" id="CHEBI:57845"/>
        <dbReference type="EC" id="4.2.1.75"/>
    </reaction>
</comment>
<comment type="pathway">
    <text>Porphyrin-containing compound metabolism; protoporphyrin-IX biosynthesis; coproporphyrinogen-III from 5-aminolevulinate: step 3/4.</text>
</comment>
<comment type="subunit">
    <text evidence="1">Monomer.</text>
</comment>
<comment type="similarity">
    <text evidence="2">Belongs to the uroporphyrinogen-III synthase family.</text>
</comment>
<keyword id="KW-0456">Lyase</keyword>
<keyword id="KW-0627">Porphyrin biosynthesis</keyword>
<keyword id="KW-1185">Reference proteome</keyword>
<organism>
    <name type="scientific">Bacillus subtilis (strain 168)</name>
    <dbReference type="NCBI Taxonomy" id="224308"/>
    <lineage>
        <taxon>Bacteria</taxon>
        <taxon>Bacillati</taxon>
        <taxon>Bacillota</taxon>
        <taxon>Bacilli</taxon>
        <taxon>Bacillales</taxon>
        <taxon>Bacillaceae</taxon>
        <taxon>Bacillus</taxon>
    </lineage>
</organism>
<sequence length="262" mass="29114">MENDFPLKGKTVLVTRNKAQAASFQQKVEALGGKAVLTSLITFRRALPNDVAEQVREDLAAPGWLVFTSVNGADFFFSYLKENQLILPAHKKIAAVGEKTARRLKMHNVSVDVMPQEYIAEQLADALKQHAEPGETITVMKGNLSRDVIKQELVPLGFEVKEWVLYETIPDEEGIEALKDAAGQYSFDYVTFTSSSTVHTFMHVLGEELKKWKANGTACISIGPLTNDALLTYGITSHTPDTFTIDGMLELMCSMSREEERI</sequence>
<accession>P21248</accession>
<evidence type="ECO:0000250" key="1"/>
<evidence type="ECO:0000305" key="2"/>
<feature type="chain" id="PRO_0000135240" description="Uroporphyrinogen-III synthase">
    <location>
        <begin position="1"/>
        <end position="262"/>
    </location>
</feature>
<name>HEM4_BACSU</name>
<dbReference type="EC" id="4.2.1.75"/>
<dbReference type="EMBL" id="M57676">
    <property type="protein sequence ID" value="AAA22513.1"/>
    <property type="molecule type" value="Genomic_DNA"/>
</dbReference>
<dbReference type="EMBL" id="AL009126">
    <property type="protein sequence ID" value="CAB14774.1"/>
    <property type="molecule type" value="Genomic_DNA"/>
</dbReference>
<dbReference type="PIR" id="B42728">
    <property type="entry name" value="B42728"/>
</dbReference>
<dbReference type="RefSeq" id="NP_390692.1">
    <property type="nucleotide sequence ID" value="NC_000964.3"/>
</dbReference>
<dbReference type="RefSeq" id="WP_003229629.1">
    <property type="nucleotide sequence ID" value="NZ_OZ025638.1"/>
</dbReference>
<dbReference type="SMR" id="P21248"/>
<dbReference type="FunCoup" id="P21248">
    <property type="interactions" value="156"/>
</dbReference>
<dbReference type="STRING" id="224308.BSU28140"/>
<dbReference type="PaxDb" id="224308-BSU28140"/>
<dbReference type="DNASU" id="937287"/>
<dbReference type="EnsemblBacteria" id="CAB14774">
    <property type="protein sequence ID" value="CAB14774"/>
    <property type="gene ID" value="BSU_28140"/>
</dbReference>
<dbReference type="GeneID" id="937287"/>
<dbReference type="KEGG" id="bsu:BSU28140"/>
<dbReference type="PATRIC" id="fig|224308.179.peg.3057"/>
<dbReference type="eggNOG" id="COG1587">
    <property type="taxonomic scope" value="Bacteria"/>
</dbReference>
<dbReference type="InParanoid" id="P21248"/>
<dbReference type="OrthoDB" id="9815856at2"/>
<dbReference type="PhylomeDB" id="P21248"/>
<dbReference type="BioCyc" id="BSUB:BSU28140-MONOMER"/>
<dbReference type="UniPathway" id="UPA00251">
    <property type="reaction ID" value="UER00320"/>
</dbReference>
<dbReference type="Proteomes" id="UP000001570">
    <property type="component" value="Chromosome"/>
</dbReference>
<dbReference type="GO" id="GO:0004852">
    <property type="term" value="F:uroporphyrinogen-III synthase activity"/>
    <property type="evidence" value="ECO:0007669"/>
    <property type="project" value="UniProtKB-EC"/>
</dbReference>
<dbReference type="GO" id="GO:0006782">
    <property type="term" value="P:protoporphyrinogen IX biosynthetic process"/>
    <property type="evidence" value="ECO:0007669"/>
    <property type="project" value="UniProtKB-UniPathway"/>
</dbReference>
<dbReference type="GO" id="GO:0006780">
    <property type="term" value="P:uroporphyrinogen III biosynthetic process"/>
    <property type="evidence" value="ECO:0007669"/>
    <property type="project" value="InterPro"/>
</dbReference>
<dbReference type="CDD" id="cd06578">
    <property type="entry name" value="HemD"/>
    <property type="match status" value="1"/>
</dbReference>
<dbReference type="Gene3D" id="3.40.50.10090">
    <property type="match status" value="2"/>
</dbReference>
<dbReference type="InterPro" id="IPR036108">
    <property type="entry name" value="4pyrrol_syn_uPrphyn_synt_sf"/>
</dbReference>
<dbReference type="InterPro" id="IPR003754">
    <property type="entry name" value="4pyrrol_synth_uPrphyn_synth"/>
</dbReference>
<dbReference type="InterPro" id="IPR039793">
    <property type="entry name" value="UROS/Hem4"/>
</dbReference>
<dbReference type="PANTHER" id="PTHR38042">
    <property type="entry name" value="UROPORPHYRINOGEN-III SYNTHASE, CHLOROPLASTIC"/>
    <property type="match status" value="1"/>
</dbReference>
<dbReference type="PANTHER" id="PTHR38042:SF1">
    <property type="entry name" value="UROPORPHYRINOGEN-III SYNTHASE, CHLOROPLASTIC"/>
    <property type="match status" value="1"/>
</dbReference>
<dbReference type="Pfam" id="PF02602">
    <property type="entry name" value="HEM4"/>
    <property type="match status" value="1"/>
</dbReference>
<dbReference type="SUPFAM" id="SSF69618">
    <property type="entry name" value="HemD-like"/>
    <property type="match status" value="1"/>
</dbReference>
<gene>
    <name type="primary">hemD</name>
    <name type="ordered locus">BSU28140</name>
</gene>
<proteinExistence type="inferred from homology"/>